<protein>
    <recommendedName>
        <fullName>Uncharacterized protein US36</fullName>
    </recommendedName>
</protein>
<organism>
    <name type="scientific">Human cytomegalovirus (strain AD169)</name>
    <name type="common">HHV-5</name>
    <name type="synonym">Human herpesvirus 5</name>
    <dbReference type="NCBI Taxonomy" id="10360"/>
    <lineage>
        <taxon>Viruses</taxon>
        <taxon>Duplodnaviria</taxon>
        <taxon>Heunggongvirae</taxon>
        <taxon>Peploviricota</taxon>
        <taxon>Herviviricetes</taxon>
        <taxon>Herpesvirales</taxon>
        <taxon>Orthoherpesviridae</taxon>
        <taxon>Betaherpesvirinae</taxon>
        <taxon>Cytomegalovirus</taxon>
        <taxon>Cytomegalovirus humanbeta5</taxon>
        <taxon>Human cytomegalovirus</taxon>
    </lineage>
</organism>
<accession>P16842</accession>
<dbReference type="EMBL" id="X17403">
    <property type="protein sequence ID" value="CAA35268.1"/>
    <property type="molecule type" value="Genomic_DNA"/>
</dbReference>
<dbReference type="PIR" id="S09950">
    <property type="entry name" value="S09950"/>
</dbReference>
<dbReference type="Proteomes" id="UP000008991">
    <property type="component" value="Segment"/>
</dbReference>
<proteinExistence type="predicted"/>
<feature type="chain" id="PRO_0000115298" description="Uncharacterized protein US36">
    <location>
        <begin position="1"/>
        <end position="110"/>
    </location>
</feature>
<name>US36_HCMVA</name>
<sequence length="110" mass="12351">HAPRLAKLLIQIRNASNNRRQHPPPPHTFTNNHCFILGADSACETRTALNLFLSMSLCVPPYFIHPTVTPFPIGTSTHDRTYYSQKYKRSVRPTANATICPPPPHTGLSY</sequence>
<gene>
    <name type="primary">US36</name>
</gene>
<organismHost>
    <name type="scientific">Homo sapiens</name>
    <name type="common">Human</name>
    <dbReference type="NCBI Taxonomy" id="9606"/>
</organismHost>
<reference key="1">
    <citation type="journal article" date="1990" name="Curr. Top. Microbiol. Immunol.">
        <title>Analysis of the protein-coding content of the sequence of human cytomegalovirus strain AD169.</title>
        <authorList>
            <person name="Chee M.S."/>
            <person name="Bankier A.T."/>
            <person name="Beck S."/>
            <person name="Bohni R."/>
            <person name="Brown C.M."/>
            <person name="Cerny R."/>
            <person name="Horsnell T."/>
            <person name="Hutchison C.A. III"/>
            <person name="Kouzarides T."/>
            <person name="Martignetti J.A."/>
            <person name="Preddie E."/>
            <person name="Satchwell S.C."/>
            <person name="Tomlinson P."/>
            <person name="Weston K.M."/>
            <person name="Barrell B.G."/>
        </authorList>
    </citation>
    <scope>NUCLEOTIDE SEQUENCE [LARGE SCALE GENOMIC DNA]</scope>
</reference>